<proteinExistence type="evidence at protein level"/>
<organism>
    <name type="scientific">Scolopendra dehaani</name>
    <name type="common">Thai centipede</name>
    <name type="synonym">Scolopendra subspinipes dehaani</name>
    <dbReference type="NCBI Taxonomy" id="2609776"/>
    <lineage>
        <taxon>Eukaryota</taxon>
        <taxon>Metazoa</taxon>
        <taxon>Ecdysozoa</taxon>
        <taxon>Arthropoda</taxon>
        <taxon>Myriapoda</taxon>
        <taxon>Chilopoda</taxon>
        <taxon>Pleurostigmophora</taxon>
        <taxon>Scolopendromorpha</taxon>
        <taxon>Scolopendridae</taxon>
        <taxon>Scolopendra</taxon>
    </lineage>
</organism>
<comment type="subcellular location">
    <subcellularLocation>
        <location evidence="2">Secreted</location>
    </subcellularLocation>
</comment>
<comment type="tissue specificity">
    <text evidence="5">Expressed by the venom gland.</text>
</comment>
<comment type="PTM">
    <text evidence="4">Contains 4 disulfide bonds.</text>
</comment>
<comment type="mass spectrometry" mass="8557.0" method="MALDI" evidence="2"/>
<comment type="miscellaneous">
    <text evidence="4">The scoloptoxin-05 family has remarkable similarities with the three-finger toxin family commonly found in snakes.</text>
</comment>
<comment type="similarity">
    <text evidence="4">Belongs to the scoloptoxin-05 family.</text>
</comment>
<protein>
    <recommendedName>
        <fullName evidence="4">U-scoloptoxin(05)-Ssd1a</fullName>
        <shortName evidence="4">U-SLPTX(05)-Ssd1a</shortName>
    </recommendedName>
    <alternativeName>
        <fullName evidence="3">Toxin SSD202</fullName>
    </alternativeName>
</protein>
<reference key="1">
    <citation type="journal article" date="2012" name="J. Proteome Res.">
        <title>Venomic and transcriptomic analysis of centipede Scolopendra subspinipes dehaani.</title>
        <authorList>
            <person name="Liu Z.C."/>
            <person name="Zhang R."/>
            <person name="Zhao F."/>
            <person name="Chen Z.M."/>
            <person name="Liu H.W."/>
            <person name="Wang Y.J."/>
            <person name="Jiang P."/>
            <person name="Zhang Y."/>
            <person name="Wu Y."/>
            <person name="Ding J.P."/>
            <person name="Lee W.H."/>
            <person name="Zhang Y."/>
        </authorList>
    </citation>
    <scope>NUCLEOTIDE SEQUENCE [MRNA]</scope>
    <scope>PROTEIN SEQUENCE OF 25-43</scope>
    <scope>SUBCELLULAR LOCATION</scope>
    <scope>MASS SPECTROMETRY</scope>
    <source>
        <tissue>Venom</tissue>
        <tissue>Venom gland</tissue>
    </source>
</reference>
<name>TX51A_SCODE</name>
<keyword id="KW-0903">Direct protein sequencing</keyword>
<keyword id="KW-1015">Disulfide bond</keyword>
<keyword id="KW-0964">Secreted</keyword>
<keyword id="KW-0732">Signal</keyword>
<keyword id="KW-0800">Toxin</keyword>
<sequence length="105" mass="11304">MKEAVKMSCLCIFVFLFLFSLTDAIKCIKCGESGLFGTEDCVTGTFEAEECGPNDQYCTKIILNDGTRTTAQRGCSVGHVPESNQKDGKVSTHMSSCNTDGCNAN</sequence>
<evidence type="ECO:0000256" key="1">
    <source>
        <dbReference type="SAM" id="MobiDB-lite"/>
    </source>
</evidence>
<evidence type="ECO:0000269" key="2">
    <source>
    </source>
</evidence>
<evidence type="ECO:0000303" key="3">
    <source>
    </source>
</evidence>
<evidence type="ECO:0000305" key="4"/>
<evidence type="ECO:0000305" key="5">
    <source>
    </source>
</evidence>
<dbReference type="EMBL" id="KC144209">
    <property type="status" value="NOT_ANNOTATED_CDS"/>
    <property type="molecule type" value="mRNA"/>
</dbReference>
<dbReference type="GO" id="GO:0005576">
    <property type="term" value="C:extracellular region"/>
    <property type="evidence" value="ECO:0007669"/>
    <property type="project" value="UniProtKB-SubCell"/>
</dbReference>
<dbReference type="GO" id="GO:0090729">
    <property type="term" value="F:toxin activity"/>
    <property type="evidence" value="ECO:0007669"/>
    <property type="project" value="UniProtKB-KW"/>
</dbReference>
<dbReference type="Gene3D" id="2.10.60.10">
    <property type="entry name" value="CD59"/>
    <property type="match status" value="1"/>
</dbReference>
<dbReference type="InterPro" id="IPR045860">
    <property type="entry name" value="Snake_toxin-like_sf"/>
</dbReference>
<dbReference type="InterPro" id="IPR035076">
    <property type="entry name" value="Toxin/TOLIP"/>
</dbReference>
<dbReference type="Pfam" id="PF00087">
    <property type="entry name" value="Toxin_TOLIP"/>
    <property type="match status" value="1"/>
</dbReference>
<dbReference type="SUPFAM" id="SSF57302">
    <property type="entry name" value="Snake toxin-like"/>
    <property type="match status" value="1"/>
</dbReference>
<accession>P0DPU8</accession>
<feature type="signal peptide" evidence="2">
    <location>
        <begin position="1"/>
        <end position="24"/>
    </location>
</feature>
<feature type="chain" id="PRO_0000446722" description="U-scoloptoxin(05)-Ssd1a" evidence="4">
    <location>
        <begin position="25"/>
        <end position="105"/>
    </location>
</feature>
<feature type="region of interest" description="Disordered" evidence="1">
    <location>
        <begin position="79"/>
        <end position="105"/>
    </location>
</feature>
<feature type="compositionally biased region" description="Polar residues" evidence="1">
    <location>
        <begin position="92"/>
        <end position="105"/>
    </location>
</feature>